<name>JANB_PENJA</name>
<accession>A0A0E3D8Q2</accession>
<reference key="1">
    <citation type="journal article" date="2015" name="Toxins">
        <title>Molecular cloning and functional analysis of gene clusters for the biosynthesis of indole-diterpenes in Penicillium crustosum and P. janthinellum.</title>
        <authorList>
            <person name="Nicholson M.J."/>
            <person name="Eaton C.J."/>
            <person name="Starkel C."/>
            <person name="Tapper B.A."/>
            <person name="Cox M.P."/>
            <person name="Scott B."/>
        </authorList>
    </citation>
    <scope>NUCLEOTIDE SEQUENCE [GENOMIC DNA]</scope>
    <scope>IDENTIFICATION</scope>
    <scope>FUNCTION</scope>
    <scope>PATHWAY</scope>
    <source>
        <strain>PN2408</strain>
    </source>
</reference>
<dbReference type="EC" id="4.2.3.-" evidence="5"/>
<dbReference type="EMBL" id="KF280651">
    <property type="protein sequence ID" value="AGZ20474.1"/>
    <property type="molecule type" value="Genomic_DNA"/>
</dbReference>
<dbReference type="GO" id="GO:0016020">
    <property type="term" value="C:membrane"/>
    <property type="evidence" value="ECO:0007669"/>
    <property type="project" value="UniProtKB-SubCell"/>
</dbReference>
<dbReference type="GO" id="GO:0016829">
    <property type="term" value="F:lyase activity"/>
    <property type="evidence" value="ECO:0007669"/>
    <property type="project" value="UniProtKB-KW"/>
</dbReference>
<dbReference type="InterPro" id="IPR039020">
    <property type="entry name" value="PaxB-like"/>
</dbReference>
<dbReference type="PANTHER" id="PTHR42038">
    <property type="match status" value="1"/>
</dbReference>
<dbReference type="PANTHER" id="PTHR42038:SF2">
    <property type="entry name" value="TERPENE CYCLASE AUSL"/>
    <property type="match status" value="1"/>
</dbReference>
<dbReference type="Pfam" id="PF25129">
    <property type="entry name" value="Pyr4-TMTC"/>
    <property type="match status" value="1"/>
</dbReference>
<feature type="chain" id="PRO_0000446544" description="Terpene cyclase janB">
    <location>
        <begin position="1"/>
        <end position="243"/>
    </location>
</feature>
<feature type="transmembrane region" description="Helical" evidence="1">
    <location>
        <begin position="19"/>
        <end position="39"/>
    </location>
</feature>
<feature type="transmembrane region" description="Helical" evidence="1">
    <location>
        <begin position="48"/>
        <end position="68"/>
    </location>
</feature>
<feature type="transmembrane region" description="Helical" evidence="1">
    <location>
        <begin position="77"/>
        <end position="97"/>
    </location>
</feature>
<feature type="transmembrane region" description="Helical" evidence="1">
    <location>
        <begin position="112"/>
        <end position="132"/>
    </location>
</feature>
<feature type="transmembrane region" description="Helical" evidence="1">
    <location>
        <begin position="134"/>
        <end position="154"/>
    </location>
</feature>
<feature type="transmembrane region" description="Helical" evidence="1">
    <location>
        <begin position="172"/>
        <end position="194"/>
    </location>
</feature>
<feature type="transmembrane region" description="Helical" evidence="1">
    <location>
        <begin position="205"/>
        <end position="225"/>
    </location>
</feature>
<comment type="function">
    <text evidence="2 5">Terpene cyclase; part of the gene cluster that mediates the biosynthesis of the indole diterpenes janthitremanes such as shearinine K or shearinine A (PubMed:26213965). The geranylgeranyl diphosphate (GGPP) synthase janG catalyzes the first step in janthitremane biosynthesis via conversion of farnesyl pyrophosphate and isopentyl pyrophosphate into geranylgeranyl pyrophosphate (GGPP) (PubMed:26213965). Condensation of indole-3-glycerol phosphate with GGPP by the prenyl transferase janC then forms 3-geranylgeranylindole (3-GGI) (PubMed:26213965). Epoxidation by the FAD-dependent monooxygenase janM leads to a epoxidized-GGI that is substrate of the terpene cyclase janB for cyclization to yield paspaline (PubMed:26213965). Paspaline is subsequently converted to 13-desoxypaspaline by the cytochrome P450 monooxygenase janP, via beta-PC-M6 in a series of alpha-face oxidations (Probable). The cytochrome P450 monooxygenase janQ is proposed to carry out sequential beta-face oxidation steps at C-7 and C-13 of 13-desoxypaspaline to form paspalicine and paspalinine respectively (Probable). The indole diterpene prenyltransferase janD may then convert paspalinine into shearinine K which is substrate of janO and/or additional enzymes for oxidation and cyclization to generate shearinine A (Probable).</text>
</comment>
<comment type="pathway">
    <text evidence="2">Secondary metabolite biosynthesis.</text>
</comment>
<comment type="subcellular location">
    <subcellularLocation>
        <location evidence="1">Membrane</location>
        <topology evidence="1">Multi-pass membrane protein</topology>
    </subcellularLocation>
</comment>
<comment type="similarity">
    <text evidence="4">Belongs to the paxB family.</text>
</comment>
<sequence length="243" mass="27112">MDGFDVSQAPREYQAVKPLADLFVLGMGLGWVINYVGMVYTSFKERTYGMAIMPLCCNIAWEIVYCVFHPSKSRVELGVFAMGLLINFGVMYAAIIFSSREWSHAPLVERNLPWIFCIGVLGFLTGHLALAAEIGPSLAYSWGAVVCQLLLSVGGLCQLLCRGSTRGASYTLWLSRFLGSCCTVGFASLRWMYWPQSFAWLNSPLVLWSLAVFLMVDGSYGVCFWYVEQYEKSVLMGRATKAM</sequence>
<organism>
    <name type="scientific">Penicillium janthinellum</name>
    <name type="common">Penicillium vitale</name>
    <dbReference type="NCBI Taxonomy" id="5079"/>
    <lineage>
        <taxon>Eukaryota</taxon>
        <taxon>Fungi</taxon>
        <taxon>Dikarya</taxon>
        <taxon>Ascomycota</taxon>
        <taxon>Pezizomycotina</taxon>
        <taxon>Eurotiomycetes</taxon>
        <taxon>Eurotiomycetidae</taxon>
        <taxon>Eurotiales</taxon>
        <taxon>Aspergillaceae</taxon>
        <taxon>Penicillium</taxon>
    </lineage>
</organism>
<evidence type="ECO:0000255" key="1"/>
<evidence type="ECO:0000269" key="2">
    <source>
    </source>
</evidence>
<evidence type="ECO:0000303" key="3">
    <source>
    </source>
</evidence>
<evidence type="ECO:0000305" key="4"/>
<evidence type="ECO:0000305" key="5">
    <source>
    </source>
</evidence>
<proteinExistence type="inferred from homology"/>
<gene>
    <name evidence="3" type="primary">janB</name>
</gene>
<keyword id="KW-0456">Lyase</keyword>
<keyword id="KW-0472">Membrane</keyword>
<keyword id="KW-0812">Transmembrane</keyword>
<keyword id="KW-1133">Transmembrane helix</keyword>
<protein>
    <recommendedName>
        <fullName evidence="3">Terpene cyclase janB</fullName>
        <ecNumber evidence="5">4.2.3.-</ecNumber>
    </recommendedName>
    <alternativeName>
        <fullName evidence="3">Janthitremanes biosynthesis cluster protein B</fullName>
    </alternativeName>
</protein>